<reference key="1">
    <citation type="journal article" date="2007" name="Environ. Microbiol.">
        <title>Whole-genome analysis of the ammonia-oxidizing bacterium, Nitrosomonas eutropha C91: implications for niche adaptation.</title>
        <authorList>
            <person name="Stein L.Y."/>
            <person name="Arp D.J."/>
            <person name="Berube P.M."/>
            <person name="Chain P.S."/>
            <person name="Hauser L."/>
            <person name="Jetten M.S."/>
            <person name="Klotz M.G."/>
            <person name="Larimer F.W."/>
            <person name="Norton J.M."/>
            <person name="Op den Camp H.J.M."/>
            <person name="Shin M."/>
            <person name="Wei X."/>
        </authorList>
    </citation>
    <scope>NUCLEOTIDE SEQUENCE [LARGE SCALE GENOMIC DNA]</scope>
    <source>
        <strain>DSM 101675 / C91 / Nm57</strain>
    </source>
</reference>
<proteinExistence type="inferred from homology"/>
<evidence type="ECO:0000255" key="1">
    <source>
        <dbReference type="HAMAP-Rule" id="MF_00639"/>
    </source>
</evidence>
<keyword id="KW-0067">ATP-binding</keyword>
<keyword id="KW-0131">Cell cycle</keyword>
<keyword id="KW-0132">Cell division</keyword>
<keyword id="KW-0133">Cell shape</keyword>
<keyword id="KW-0961">Cell wall biogenesis/degradation</keyword>
<keyword id="KW-0963">Cytoplasm</keyword>
<keyword id="KW-0436">Ligase</keyword>
<keyword id="KW-0547">Nucleotide-binding</keyword>
<keyword id="KW-0573">Peptidoglycan synthesis</keyword>
<dbReference type="EC" id="6.3.2.9" evidence="1"/>
<dbReference type="EMBL" id="CP000450">
    <property type="protein sequence ID" value="ABI58532.1"/>
    <property type="molecule type" value="Genomic_DNA"/>
</dbReference>
<dbReference type="RefSeq" id="WP_011633376.1">
    <property type="nucleotide sequence ID" value="NC_008344.1"/>
</dbReference>
<dbReference type="SMR" id="Q0AJD9"/>
<dbReference type="STRING" id="335283.Neut_0248"/>
<dbReference type="KEGG" id="net:Neut_0248"/>
<dbReference type="eggNOG" id="COG0771">
    <property type="taxonomic scope" value="Bacteria"/>
</dbReference>
<dbReference type="HOGENOM" id="CLU_032540_1_0_4"/>
<dbReference type="OrthoDB" id="9809796at2"/>
<dbReference type="UniPathway" id="UPA00219"/>
<dbReference type="Proteomes" id="UP000001966">
    <property type="component" value="Chromosome"/>
</dbReference>
<dbReference type="GO" id="GO:0005737">
    <property type="term" value="C:cytoplasm"/>
    <property type="evidence" value="ECO:0007669"/>
    <property type="project" value="UniProtKB-SubCell"/>
</dbReference>
<dbReference type="GO" id="GO:0005524">
    <property type="term" value="F:ATP binding"/>
    <property type="evidence" value="ECO:0007669"/>
    <property type="project" value="UniProtKB-UniRule"/>
</dbReference>
<dbReference type="GO" id="GO:0008764">
    <property type="term" value="F:UDP-N-acetylmuramoylalanine-D-glutamate ligase activity"/>
    <property type="evidence" value="ECO:0007669"/>
    <property type="project" value="UniProtKB-UniRule"/>
</dbReference>
<dbReference type="GO" id="GO:0051301">
    <property type="term" value="P:cell division"/>
    <property type="evidence" value="ECO:0007669"/>
    <property type="project" value="UniProtKB-KW"/>
</dbReference>
<dbReference type="GO" id="GO:0071555">
    <property type="term" value="P:cell wall organization"/>
    <property type="evidence" value="ECO:0007669"/>
    <property type="project" value="UniProtKB-KW"/>
</dbReference>
<dbReference type="GO" id="GO:0009252">
    <property type="term" value="P:peptidoglycan biosynthetic process"/>
    <property type="evidence" value="ECO:0007669"/>
    <property type="project" value="UniProtKB-UniRule"/>
</dbReference>
<dbReference type="GO" id="GO:0008360">
    <property type="term" value="P:regulation of cell shape"/>
    <property type="evidence" value="ECO:0007669"/>
    <property type="project" value="UniProtKB-KW"/>
</dbReference>
<dbReference type="Gene3D" id="3.90.190.20">
    <property type="entry name" value="Mur ligase, C-terminal domain"/>
    <property type="match status" value="1"/>
</dbReference>
<dbReference type="Gene3D" id="3.40.1190.10">
    <property type="entry name" value="Mur-like, catalytic domain"/>
    <property type="match status" value="1"/>
</dbReference>
<dbReference type="Gene3D" id="3.40.50.720">
    <property type="entry name" value="NAD(P)-binding Rossmann-like Domain"/>
    <property type="match status" value="1"/>
</dbReference>
<dbReference type="HAMAP" id="MF_00639">
    <property type="entry name" value="MurD"/>
    <property type="match status" value="1"/>
</dbReference>
<dbReference type="InterPro" id="IPR036565">
    <property type="entry name" value="Mur-like_cat_sf"/>
</dbReference>
<dbReference type="InterPro" id="IPR004101">
    <property type="entry name" value="Mur_ligase_C"/>
</dbReference>
<dbReference type="InterPro" id="IPR036615">
    <property type="entry name" value="Mur_ligase_C_dom_sf"/>
</dbReference>
<dbReference type="InterPro" id="IPR013221">
    <property type="entry name" value="Mur_ligase_cen"/>
</dbReference>
<dbReference type="InterPro" id="IPR005762">
    <property type="entry name" value="MurD"/>
</dbReference>
<dbReference type="NCBIfam" id="TIGR01087">
    <property type="entry name" value="murD"/>
    <property type="match status" value="1"/>
</dbReference>
<dbReference type="PANTHER" id="PTHR43692">
    <property type="entry name" value="UDP-N-ACETYLMURAMOYLALANINE--D-GLUTAMATE LIGASE"/>
    <property type="match status" value="1"/>
</dbReference>
<dbReference type="PANTHER" id="PTHR43692:SF1">
    <property type="entry name" value="UDP-N-ACETYLMURAMOYLALANINE--D-GLUTAMATE LIGASE"/>
    <property type="match status" value="1"/>
</dbReference>
<dbReference type="Pfam" id="PF02875">
    <property type="entry name" value="Mur_ligase_C"/>
    <property type="match status" value="1"/>
</dbReference>
<dbReference type="Pfam" id="PF08245">
    <property type="entry name" value="Mur_ligase_M"/>
    <property type="match status" value="1"/>
</dbReference>
<dbReference type="Pfam" id="PF21799">
    <property type="entry name" value="MurD-like_N"/>
    <property type="match status" value="1"/>
</dbReference>
<dbReference type="SUPFAM" id="SSF51984">
    <property type="entry name" value="MurCD N-terminal domain"/>
    <property type="match status" value="1"/>
</dbReference>
<dbReference type="SUPFAM" id="SSF53623">
    <property type="entry name" value="MurD-like peptide ligases, catalytic domain"/>
    <property type="match status" value="1"/>
</dbReference>
<dbReference type="SUPFAM" id="SSF53244">
    <property type="entry name" value="MurD-like peptide ligases, peptide-binding domain"/>
    <property type="match status" value="1"/>
</dbReference>
<sequence length="470" mass="50660">MNYADKKILVLGMGKTGISMVKWLSRAGARVSVADTRTTPPNLELLSQIVPLETIFCGPFKAELFKDIDAIAISPGVAIAEPLVQAALQQGVSVIGDIELFAIALDQHAPPGTKILAITGSNGKTTVATMVGEMARNTGWDVEVAGNIGLAALDALMQRIDTGKWPHLWVLELSSFQLETTSSLRPNAAVVLNLSEDHLDRYRIIEEYAAAKARIFPDPHNSCVQVLNREDARVYAMAHENSKQLTFGLSAPAFDDEFGVLPSGSDLWLAQGTTRLMKVSELAVAGLHNAANALAALALCRAIDLPFEPLLHALHIFKGLPHRMQKIAEFNGVTFYDDSKSTNVGSAVAALNGFRKNVILIAGGDGKGQDFSPLEQPVSKHTRGVVLLGRDAEKISQAIQGCNVPVHRVATMDEAVRVSFLLAERGDSVLLSPACASLDMFNNYIHRAEVFTTAVQGIEHKFILTAQTCH</sequence>
<protein>
    <recommendedName>
        <fullName evidence="1">UDP-N-acetylmuramoylalanine--D-glutamate ligase</fullName>
        <ecNumber evidence="1">6.3.2.9</ecNumber>
    </recommendedName>
    <alternativeName>
        <fullName evidence="1">D-glutamic acid-adding enzyme</fullName>
    </alternativeName>
    <alternativeName>
        <fullName evidence="1">UDP-N-acetylmuramoyl-L-alanyl-D-glutamate synthetase</fullName>
    </alternativeName>
</protein>
<organism>
    <name type="scientific">Nitrosomonas eutropha (strain DSM 101675 / C91 / Nm57)</name>
    <dbReference type="NCBI Taxonomy" id="335283"/>
    <lineage>
        <taxon>Bacteria</taxon>
        <taxon>Pseudomonadati</taxon>
        <taxon>Pseudomonadota</taxon>
        <taxon>Betaproteobacteria</taxon>
        <taxon>Nitrosomonadales</taxon>
        <taxon>Nitrosomonadaceae</taxon>
        <taxon>Nitrosomonas</taxon>
    </lineage>
</organism>
<feature type="chain" id="PRO_0000301443" description="UDP-N-acetylmuramoylalanine--D-glutamate ligase">
    <location>
        <begin position="1"/>
        <end position="470"/>
    </location>
</feature>
<feature type="binding site" evidence="1">
    <location>
        <begin position="120"/>
        <end position="126"/>
    </location>
    <ligand>
        <name>ATP</name>
        <dbReference type="ChEBI" id="CHEBI:30616"/>
    </ligand>
</feature>
<name>MURD_NITEC</name>
<comment type="function">
    <text evidence="1">Cell wall formation. Catalyzes the addition of glutamate to the nucleotide precursor UDP-N-acetylmuramoyl-L-alanine (UMA).</text>
</comment>
<comment type="catalytic activity">
    <reaction evidence="1">
        <text>UDP-N-acetyl-alpha-D-muramoyl-L-alanine + D-glutamate + ATP = UDP-N-acetyl-alpha-D-muramoyl-L-alanyl-D-glutamate + ADP + phosphate + H(+)</text>
        <dbReference type="Rhea" id="RHEA:16429"/>
        <dbReference type="ChEBI" id="CHEBI:15378"/>
        <dbReference type="ChEBI" id="CHEBI:29986"/>
        <dbReference type="ChEBI" id="CHEBI:30616"/>
        <dbReference type="ChEBI" id="CHEBI:43474"/>
        <dbReference type="ChEBI" id="CHEBI:83898"/>
        <dbReference type="ChEBI" id="CHEBI:83900"/>
        <dbReference type="ChEBI" id="CHEBI:456216"/>
        <dbReference type="EC" id="6.3.2.9"/>
    </reaction>
</comment>
<comment type="pathway">
    <text evidence="1">Cell wall biogenesis; peptidoglycan biosynthesis.</text>
</comment>
<comment type="subcellular location">
    <subcellularLocation>
        <location evidence="1">Cytoplasm</location>
    </subcellularLocation>
</comment>
<comment type="similarity">
    <text evidence="1">Belongs to the MurCDEF family.</text>
</comment>
<accession>Q0AJD9</accession>
<gene>
    <name evidence="1" type="primary">murD</name>
    <name type="ordered locus">Neut_0248</name>
</gene>